<organism>
    <name type="scientific">Escherichia coli O157:H7 (strain EC4115 / EHEC)</name>
    <dbReference type="NCBI Taxonomy" id="444450"/>
    <lineage>
        <taxon>Bacteria</taxon>
        <taxon>Pseudomonadati</taxon>
        <taxon>Pseudomonadota</taxon>
        <taxon>Gammaproteobacteria</taxon>
        <taxon>Enterobacterales</taxon>
        <taxon>Enterobacteriaceae</taxon>
        <taxon>Escherichia</taxon>
    </lineage>
</organism>
<sequence>MNKVVLLCRPGFEKECAAEITDKAGQREIFGFARVKENAGYVIYECYQPDDGDKLIRELPFSSLIFARQWFVVGELLQHLPPEDRITPIVGMLQGVVEKGGELRVEVADTNESKELLKFCRKFTVPLRAALRDAGVLANYETPKRPVVHVFFIAPGCCYTGYSYSNNNSPFYMGIPRLKFPADAPSRSTLKLEEAFHVFIPADEWDERLANGMWAVDLGACPGGWTYQLVKRNMWVYSVDNGPMAQSLMDTGQVTWLREDGFKFRPTRSNISWMVCDMVEKPAKVAALMAQWLVNGWCRETIFNLKLPMKKRYEEVSHNLAYIQAQLDEHGINAQIQARQLYHDREEVTVHVRRIWAAVGGRRDER</sequence>
<reference key="1">
    <citation type="journal article" date="2011" name="Proc. Natl. Acad. Sci. U.S.A.">
        <title>Genomic anatomy of Escherichia coli O157:H7 outbreaks.</title>
        <authorList>
            <person name="Eppinger M."/>
            <person name="Mammel M.K."/>
            <person name="Leclerc J.E."/>
            <person name="Ravel J."/>
            <person name="Cebula T.A."/>
        </authorList>
    </citation>
    <scope>NUCLEOTIDE SEQUENCE [LARGE SCALE GENOMIC DNA]</scope>
    <source>
        <strain>EC4115 / EHEC</strain>
    </source>
</reference>
<dbReference type="EC" id="2.1.1.186" evidence="1"/>
<dbReference type="EMBL" id="CP001164">
    <property type="protein sequence ID" value="ACI37173.1"/>
    <property type="molecule type" value="Genomic_DNA"/>
</dbReference>
<dbReference type="RefSeq" id="WP_001045520.1">
    <property type="nucleotide sequence ID" value="NC_011353.1"/>
</dbReference>
<dbReference type="SMR" id="B5Z4C6"/>
<dbReference type="GeneID" id="75203803"/>
<dbReference type="KEGG" id="ecf:ECH74115_4070"/>
<dbReference type="HOGENOM" id="CLU_043780_0_0_6"/>
<dbReference type="GO" id="GO:0005737">
    <property type="term" value="C:cytoplasm"/>
    <property type="evidence" value="ECO:0007669"/>
    <property type="project" value="UniProtKB-SubCell"/>
</dbReference>
<dbReference type="GO" id="GO:0008757">
    <property type="term" value="F:S-adenosylmethionine-dependent methyltransferase activity"/>
    <property type="evidence" value="ECO:0007669"/>
    <property type="project" value="UniProtKB-UniRule"/>
</dbReference>
<dbReference type="GO" id="GO:0032259">
    <property type="term" value="P:methylation"/>
    <property type="evidence" value="ECO:0007669"/>
    <property type="project" value="UniProtKB-KW"/>
</dbReference>
<dbReference type="GO" id="GO:0006364">
    <property type="term" value="P:rRNA processing"/>
    <property type="evidence" value="ECO:0007669"/>
    <property type="project" value="UniProtKB-UniRule"/>
</dbReference>
<dbReference type="FunFam" id="3.30.2300.20:FF:000001">
    <property type="entry name" value="Ribosomal RNA large subunit methyltransferase M"/>
    <property type="match status" value="1"/>
</dbReference>
<dbReference type="FunFam" id="3.30.70.2810:FF:000001">
    <property type="entry name" value="Ribosomal RNA large subunit methyltransferase M"/>
    <property type="match status" value="1"/>
</dbReference>
<dbReference type="FunFam" id="3.40.50.150:FF:000020">
    <property type="entry name" value="Ribosomal RNA large subunit methyltransferase M"/>
    <property type="match status" value="1"/>
</dbReference>
<dbReference type="Gene3D" id="3.30.2300.20">
    <property type="match status" value="1"/>
</dbReference>
<dbReference type="Gene3D" id="3.30.70.2810">
    <property type="match status" value="1"/>
</dbReference>
<dbReference type="Gene3D" id="3.40.50.150">
    <property type="entry name" value="Vaccinia Virus protein VP39"/>
    <property type="match status" value="1"/>
</dbReference>
<dbReference type="HAMAP" id="MF_01551">
    <property type="entry name" value="23SrRNA_methyltr_M"/>
    <property type="match status" value="1"/>
</dbReference>
<dbReference type="InterPro" id="IPR040739">
    <property type="entry name" value="RlmM_FDX"/>
</dbReference>
<dbReference type="InterPro" id="IPR048646">
    <property type="entry name" value="RlmM_THUMP-like"/>
</dbReference>
<dbReference type="InterPro" id="IPR002877">
    <property type="entry name" value="RNA_MeTrfase_FtsJ_dom"/>
</dbReference>
<dbReference type="InterPro" id="IPR011224">
    <property type="entry name" value="rRNA_MeTrfase_M"/>
</dbReference>
<dbReference type="InterPro" id="IPR029063">
    <property type="entry name" value="SAM-dependent_MTases_sf"/>
</dbReference>
<dbReference type="NCBIfam" id="NF008734">
    <property type="entry name" value="PRK11760.1"/>
    <property type="match status" value="1"/>
</dbReference>
<dbReference type="PANTHER" id="PTHR37524">
    <property type="entry name" value="RIBOSOMAL RNA LARGE SUBUNIT METHYLTRANSFERASE M"/>
    <property type="match status" value="1"/>
</dbReference>
<dbReference type="PANTHER" id="PTHR37524:SF2">
    <property type="entry name" value="RIBOSOMAL RNA METHYLTRANSFERASE FTSJ DOMAIN-CONTAINING PROTEIN"/>
    <property type="match status" value="1"/>
</dbReference>
<dbReference type="Pfam" id="PF01728">
    <property type="entry name" value="FtsJ"/>
    <property type="match status" value="1"/>
</dbReference>
<dbReference type="Pfam" id="PF18125">
    <property type="entry name" value="RlmM_FDX"/>
    <property type="match status" value="1"/>
</dbReference>
<dbReference type="Pfam" id="PF21239">
    <property type="entry name" value="RLMM_N"/>
    <property type="match status" value="1"/>
</dbReference>
<dbReference type="PIRSF" id="PIRSF028774">
    <property type="entry name" value="UCP028774"/>
    <property type="match status" value="1"/>
</dbReference>
<dbReference type="SUPFAM" id="SSF53335">
    <property type="entry name" value="S-adenosyl-L-methionine-dependent methyltransferases"/>
    <property type="match status" value="1"/>
</dbReference>
<comment type="function">
    <text evidence="1">Catalyzes the 2'-O-methylation at nucleotide C2498 in 23S rRNA.</text>
</comment>
<comment type="catalytic activity">
    <reaction evidence="1">
        <text>cytidine(2498) in 23S rRNA + S-adenosyl-L-methionine = 2'-O-methylcytidine(2498) in 23S rRNA + S-adenosyl-L-homocysteine + H(+)</text>
        <dbReference type="Rhea" id="RHEA:42788"/>
        <dbReference type="Rhea" id="RHEA-COMP:10244"/>
        <dbReference type="Rhea" id="RHEA-COMP:10245"/>
        <dbReference type="ChEBI" id="CHEBI:15378"/>
        <dbReference type="ChEBI" id="CHEBI:57856"/>
        <dbReference type="ChEBI" id="CHEBI:59789"/>
        <dbReference type="ChEBI" id="CHEBI:74495"/>
        <dbReference type="ChEBI" id="CHEBI:82748"/>
        <dbReference type="EC" id="2.1.1.186"/>
    </reaction>
</comment>
<comment type="subunit">
    <text evidence="1">Monomer.</text>
</comment>
<comment type="subcellular location">
    <subcellularLocation>
        <location evidence="1">Cytoplasm</location>
    </subcellularLocation>
</comment>
<comment type="similarity">
    <text evidence="1">Belongs to the class I-like SAM-binding methyltransferase superfamily. RNA methyltransferase RlmE family. RlmM subfamily.</text>
</comment>
<keyword id="KW-0963">Cytoplasm</keyword>
<keyword id="KW-0489">Methyltransferase</keyword>
<keyword id="KW-0698">rRNA processing</keyword>
<keyword id="KW-0949">S-adenosyl-L-methionine</keyword>
<keyword id="KW-0808">Transferase</keyword>
<evidence type="ECO:0000255" key="1">
    <source>
        <dbReference type="HAMAP-Rule" id="MF_01551"/>
    </source>
</evidence>
<proteinExistence type="inferred from homology"/>
<gene>
    <name evidence="1" type="primary">rlmM</name>
    <name type="ordered locus">ECH74115_4070</name>
</gene>
<protein>
    <recommendedName>
        <fullName evidence="1">Ribosomal RNA large subunit methyltransferase M</fullName>
        <ecNumber evidence="1">2.1.1.186</ecNumber>
    </recommendedName>
    <alternativeName>
        <fullName evidence="1">23S rRNA (cytidine2498-2'-O)-methyltransferase</fullName>
    </alternativeName>
    <alternativeName>
        <fullName evidence="1">23S rRNA 2'-O-ribose methyltransferase RlmM</fullName>
    </alternativeName>
</protein>
<name>RLMM_ECO5E</name>
<feature type="chain" id="PRO_1000201515" description="Ribosomal RNA large subunit methyltransferase M">
    <location>
        <begin position="1"/>
        <end position="366"/>
    </location>
</feature>
<feature type="active site" description="Proton acceptor" evidence="1">
    <location>
        <position position="306"/>
    </location>
</feature>
<feature type="binding site" evidence="1">
    <location>
        <position position="188"/>
    </location>
    <ligand>
        <name>S-adenosyl-L-methionine</name>
        <dbReference type="ChEBI" id="CHEBI:59789"/>
    </ligand>
</feature>
<feature type="binding site" evidence="1">
    <location>
        <begin position="221"/>
        <end position="224"/>
    </location>
    <ligand>
        <name>S-adenosyl-L-methionine</name>
        <dbReference type="ChEBI" id="CHEBI:59789"/>
    </ligand>
</feature>
<feature type="binding site" evidence="1">
    <location>
        <position position="240"/>
    </location>
    <ligand>
        <name>S-adenosyl-L-methionine</name>
        <dbReference type="ChEBI" id="CHEBI:59789"/>
    </ligand>
</feature>
<feature type="binding site" evidence="1">
    <location>
        <position position="260"/>
    </location>
    <ligand>
        <name>S-adenosyl-L-methionine</name>
        <dbReference type="ChEBI" id="CHEBI:59789"/>
    </ligand>
</feature>
<feature type="binding site" evidence="1">
    <location>
        <position position="277"/>
    </location>
    <ligand>
        <name>S-adenosyl-L-methionine</name>
        <dbReference type="ChEBI" id="CHEBI:59789"/>
    </ligand>
</feature>
<accession>B5Z4C6</accession>